<proteinExistence type="inferred from homology"/>
<accession>B0SF64</accession>
<reference key="1">
    <citation type="journal article" date="2008" name="PLoS ONE">
        <title>Genome sequence of the saprophyte Leptospira biflexa provides insights into the evolution of Leptospira and the pathogenesis of leptospirosis.</title>
        <authorList>
            <person name="Picardeau M."/>
            <person name="Bulach D.M."/>
            <person name="Bouchier C."/>
            <person name="Zuerner R.L."/>
            <person name="Zidane N."/>
            <person name="Wilson P.J."/>
            <person name="Creno S."/>
            <person name="Kuczek E.S."/>
            <person name="Bommezzadri S."/>
            <person name="Davis J.C."/>
            <person name="McGrath A."/>
            <person name="Johnson M.J."/>
            <person name="Boursaux-Eude C."/>
            <person name="Seemann T."/>
            <person name="Rouy Z."/>
            <person name="Coppel R.L."/>
            <person name="Rood J.I."/>
            <person name="Lajus A."/>
            <person name="Davies J.K."/>
            <person name="Medigue C."/>
            <person name="Adler B."/>
        </authorList>
    </citation>
    <scope>NUCLEOTIDE SEQUENCE [LARGE SCALE GENOMIC DNA]</scope>
    <source>
        <strain>Patoc 1 / Ames</strain>
    </source>
</reference>
<feature type="chain" id="PRO_0000382326" description="Glutamate-1-semialdehyde 2,1-aminomutase">
    <location>
        <begin position="1"/>
        <end position="425"/>
    </location>
</feature>
<feature type="modified residue" description="N6-(pyridoxal phosphate)lysine" evidence="1">
    <location>
        <position position="264"/>
    </location>
</feature>
<keyword id="KW-0963">Cytoplasm</keyword>
<keyword id="KW-0413">Isomerase</keyword>
<keyword id="KW-0627">Porphyrin biosynthesis</keyword>
<keyword id="KW-0663">Pyridoxal phosphate</keyword>
<gene>
    <name evidence="1" type="primary">hemL</name>
    <name type="ordered locus">LBF_1127</name>
</gene>
<comment type="catalytic activity">
    <reaction evidence="1">
        <text>(S)-4-amino-5-oxopentanoate = 5-aminolevulinate</text>
        <dbReference type="Rhea" id="RHEA:14265"/>
        <dbReference type="ChEBI" id="CHEBI:57501"/>
        <dbReference type="ChEBI" id="CHEBI:356416"/>
        <dbReference type="EC" id="5.4.3.8"/>
    </reaction>
</comment>
<comment type="cofactor">
    <cofactor evidence="1">
        <name>pyridoxal 5'-phosphate</name>
        <dbReference type="ChEBI" id="CHEBI:597326"/>
    </cofactor>
</comment>
<comment type="pathway">
    <text evidence="1">Porphyrin-containing compound metabolism; protoporphyrin-IX biosynthesis; 5-aminolevulinate from L-glutamyl-tRNA(Glu): step 2/2.</text>
</comment>
<comment type="subunit">
    <text evidence="1">Homodimer.</text>
</comment>
<comment type="subcellular location">
    <subcellularLocation>
        <location evidence="1">Cytoplasm</location>
    </subcellularLocation>
</comment>
<comment type="similarity">
    <text evidence="1">Belongs to the class-III pyridoxal-phosphate-dependent aminotransferase family. HemL subfamily.</text>
</comment>
<dbReference type="EC" id="5.4.3.8" evidence="1"/>
<dbReference type="EMBL" id="CP000777">
    <property type="protein sequence ID" value="ABZ93651.1"/>
    <property type="molecule type" value="Genomic_DNA"/>
</dbReference>
<dbReference type="RefSeq" id="WP_012388165.1">
    <property type="nucleotide sequence ID" value="NC_010842.1"/>
</dbReference>
<dbReference type="SMR" id="B0SF64"/>
<dbReference type="KEGG" id="lbf:LBF_1127"/>
<dbReference type="HOGENOM" id="CLU_016922_1_5_12"/>
<dbReference type="UniPathway" id="UPA00251">
    <property type="reaction ID" value="UER00317"/>
</dbReference>
<dbReference type="GO" id="GO:0005737">
    <property type="term" value="C:cytoplasm"/>
    <property type="evidence" value="ECO:0007669"/>
    <property type="project" value="UniProtKB-SubCell"/>
</dbReference>
<dbReference type="GO" id="GO:0042286">
    <property type="term" value="F:glutamate-1-semialdehyde 2,1-aminomutase activity"/>
    <property type="evidence" value="ECO:0007669"/>
    <property type="project" value="UniProtKB-UniRule"/>
</dbReference>
<dbReference type="GO" id="GO:0030170">
    <property type="term" value="F:pyridoxal phosphate binding"/>
    <property type="evidence" value="ECO:0007669"/>
    <property type="project" value="InterPro"/>
</dbReference>
<dbReference type="GO" id="GO:0008483">
    <property type="term" value="F:transaminase activity"/>
    <property type="evidence" value="ECO:0007669"/>
    <property type="project" value="InterPro"/>
</dbReference>
<dbReference type="GO" id="GO:0006782">
    <property type="term" value="P:protoporphyrinogen IX biosynthetic process"/>
    <property type="evidence" value="ECO:0007669"/>
    <property type="project" value="UniProtKB-UniRule"/>
</dbReference>
<dbReference type="CDD" id="cd00610">
    <property type="entry name" value="OAT_like"/>
    <property type="match status" value="1"/>
</dbReference>
<dbReference type="FunFam" id="3.40.640.10:FF:000021">
    <property type="entry name" value="Glutamate-1-semialdehyde 2,1-aminomutase"/>
    <property type="match status" value="1"/>
</dbReference>
<dbReference type="Gene3D" id="3.90.1150.10">
    <property type="entry name" value="Aspartate Aminotransferase, domain 1"/>
    <property type="match status" value="1"/>
</dbReference>
<dbReference type="Gene3D" id="3.40.640.10">
    <property type="entry name" value="Type I PLP-dependent aspartate aminotransferase-like (Major domain)"/>
    <property type="match status" value="1"/>
</dbReference>
<dbReference type="HAMAP" id="MF_00375">
    <property type="entry name" value="HemL_aminotrans_3"/>
    <property type="match status" value="1"/>
</dbReference>
<dbReference type="InterPro" id="IPR004639">
    <property type="entry name" value="4pyrrol_synth_GluAld_NH2Trfase"/>
</dbReference>
<dbReference type="InterPro" id="IPR005814">
    <property type="entry name" value="Aminotrans_3"/>
</dbReference>
<dbReference type="InterPro" id="IPR049704">
    <property type="entry name" value="Aminotrans_3_PPA_site"/>
</dbReference>
<dbReference type="InterPro" id="IPR015424">
    <property type="entry name" value="PyrdxlP-dep_Trfase"/>
</dbReference>
<dbReference type="InterPro" id="IPR015421">
    <property type="entry name" value="PyrdxlP-dep_Trfase_major"/>
</dbReference>
<dbReference type="InterPro" id="IPR015422">
    <property type="entry name" value="PyrdxlP-dep_Trfase_small"/>
</dbReference>
<dbReference type="NCBIfam" id="NF000818">
    <property type="entry name" value="PRK00062.1"/>
    <property type="match status" value="1"/>
</dbReference>
<dbReference type="PANTHER" id="PTHR43713">
    <property type="entry name" value="GLUTAMATE-1-SEMIALDEHYDE 2,1-AMINOMUTASE"/>
    <property type="match status" value="1"/>
</dbReference>
<dbReference type="PANTHER" id="PTHR43713:SF3">
    <property type="entry name" value="GLUTAMATE-1-SEMIALDEHYDE 2,1-AMINOMUTASE 1, CHLOROPLASTIC-RELATED"/>
    <property type="match status" value="1"/>
</dbReference>
<dbReference type="Pfam" id="PF00202">
    <property type="entry name" value="Aminotran_3"/>
    <property type="match status" value="1"/>
</dbReference>
<dbReference type="SUPFAM" id="SSF53383">
    <property type="entry name" value="PLP-dependent transferases"/>
    <property type="match status" value="1"/>
</dbReference>
<dbReference type="PROSITE" id="PS00600">
    <property type="entry name" value="AA_TRANSFER_CLASS_3"/>
    <property type="match status" value="1"/>
</dbReference>
<sequence>MNSETLFQRSKQVVPGGVHSPVRSFSSVGGTPIFFSEARGAYLKSVEGNDFIDYCLSFGPLLFGHRHPEIQEVVEDTVNKAWSFGACEPYSLELAEFITERIPWVEKIRFVNSGTEAVMSALRVARAATGRNKILKFDGCYHGHLDQLLVKSGSGLAGLSSSDSKGIGPEIIQNTLVLPLDDESKLEELFQREGSNIACLAIEPLPANYGLLPQRIEFLKKCRELTTKYGVLLLFDEVISGFRVSFQGMAGITGIIPDLVCYGKIIGGGFPVGAYAGKRELMDLVAPSGPVYQAGTLSANPIGMRAGLKTLTKAWTENPYPALESATKQLTDGILTLLSEKGDTNWEAVTFGSLFWLKGKTENPIRRIDQIPGTHKSNFATLFHKLLKQGVYLAPSGYEVGFLSTAHTNDIINLTLEKTKKALKD</sequence>
<evidence type="ECO:0000255" key="1">
    <source>
        <dbReference type="HAMAP-Rule" id="MF_00375"/>
    </source>
</evidence>
<protein>
    <recommendedName>
        <fullName evidence="1">Glutamate-1-semialdehyde 2,1-aminomutase</fullName>
        <shortName evidence="1">GSA</shortName>
        <ecNumber evidence="1">5.4.3.8</ecNumber>
    </recommendedName>
    <alternativeName>
        <fullName evidence="1">Glutamate-1-semialdehyde aminotransferase</fullName>
        <shortName evidence="1">GSA-AT</shortName>
    </alternativeName>
</protein>
<name>GSA_LEPBA</name>
<organism>
    <name type="scientific">Leptospira biflexa serovar Patoc (strain Patoc 1 / Ames)</name>
    <dbReference type="NCBI Taxonomy" id="355278"/>
    <lineage>
        <taxon>Bacteria</taxon>
        <taxon>Pseudomonadati</taxon>
        <taxon>Spirochaetota</taxon>
        <taxon>Spirochaetia</taxon>
        <taxon>Leptospirales</taxon>
        <taxon>Leptospiraceae</taxon>
        <taxon>Leptospira</taxon>
    </lineage>
</organism>